<accession>B8FGT4</accession>
<protein>
    <recommendedName>
        <fullName evidence="1">ATP synthase subunit beta</fullName>
        <ecNumber evidence="1">7.1.2.2</ecNumber>
    </recommendedName>
    <alternativeName>
        <fullName evidence="1">ATP synthase F1 sector subunit beta</fullName>
    </alternativeName>
    <alternativeName>
        <fullName evidence="1">F-ATPase subunit beta</fullName>
    </alternativeName>
</protein>
<proteinExistence type="inferred from homology"/>
<feature type="chain" id="PRO_1000166584" description="ATP synthase subunit beta">
    <location>
        <begin position="1"/>
        <end position="472"/>
    </location>
</feature>
<feature type="binding site" evidence="1">
    <location>
        <begin position="157"/>
        <end position="164"/>
    </location>
    <ligand>
        <name>ATP</name>
        <dbReference type="ChEBI" id="CHEBI:30616"/>
    </ligand>
</feature>
<sequence>MGENIGKITQVMGPVVDVEFEQGNLPNILTALLITNPTINDEADNLVVEVAQHLGDNVVRTIAMDVTDGLVRGMPVKDTGDPIMMPVGEAVLGRVLNVVGRPVDGLGPVSQEKMLPIHRLAPKFTEQDTTVRVLETGVKVIDLLVPFPRGGKMGMFGGAGVGKTVIMMEMVHNIAMQHGGISVFAGVGERTREGNDLYHEMKEGGVLPKASLVYGQMTEPPGARARVALSALTSAEYFRDQEGQDVLIFIDNIFRFTQAGSEVSALLGRMPSAVGYQPTLAVDLGELQERITSTDKGSITAVQCVYVPADDLTDPAPATTFAHLDGTVVLSRQIVELGIYPAVDPLDSSSRILDPGYLGDEHYGVARTVQQMLQKYKELQDIIAILGMDELSDEDKITVARARKIQRFLSQPFFVAENFTGKPGKYVKLEDTVRGFKEIVDGKHDDLPERAFYMVGGIEEAIENAKAMAEAA</sequence>
<evidence type="ECO:0000255" key="1">
    <source>
        <dbReference type="HAMAP-Rule" id="MF_01347"/>
    </source>
</evidence>
<keyword id="KW-0066">ATP synthesis</keyword>
<keyword id="KW-0067">ATP-binding</keyword>
<keyword id="KW-0997">Cell inner membrane</keyword>
<keyword id="KW-1003">Cell membrane</keyword>
<keyword id="KW-0139">CF(1)</keyword>
<keyword id="KW-0375">Hydrogen ion transport</keyword>
<keyword id="KW-0406">Ion transport</keyword>
<keyword id="KW-0472">Membrane</keyword>
<keyword id="KW-0547">Nucleotide-binding</keyword>
<keyword id="KW-1185">Reference proteome</keyword>
<keyword id="KW-1278">Translocase</keyword>
<keyword id="KW-0813">Transport</keyword>
<dbReference type="EC" id="7.1.2.2" evidence="1"/>
<dbReference type="EMBL" id="CP001322">
    <property type="protein sequence ID" value="ACL05314.1"/>
    <property type="molecule type" value="Genomic_DNA"/>
</dbReference>
<dbReference type="RefSeq" id="WP_015948371.1">
    <property type="nucleotide sequence ID" value="NC_011768.1"/>
</dbReference>
<dbReference type="SMR" id="B8FGT4"/>
<dbReference type="KEGG" id="dal:Dalk_3626"/>
<dbReference type="eggNOG" id="COG0055">
    <property type="taxonomic scope" value="Bacteria"/>
</dbReference>
<dbReference type="HOGENOM" id="CLU_022398_0_2_7"/>
<dbReference type="Proteomes" id="UP000000739">
    <property type="component" value="Chromosome"/>
</dbReference>
<dbReference type="GO" id="GO:0005886">
    <property type="term" value="C:plasma membrane"/>
    <property type="evidence" value="ECO:0007669"/>
    <property type="project" value="UniProtKB-SubCell"/>
</dbReference>
<dbReference type="GO" id="GO:0045259">
    <property type="term" value="C:proton-transporting ATP synthase complex"/>
    <property type="evidence" value="ECO:0007669"/>
    <property type="project" value="UniProtKB-KW"/>
</dbReference>
<dbReference type="GO" id="GO:0005524">
    <property type="term" value="F:ATP binding"/>
    <property type="evidence" value="ECO:0007669"/>
    <property type="project" value="UniProtKB-UniRule"/>
</dbReference>
<dbReference type="GO" id="GO:0016887">
    <property type="term" value="F:ATP hydrolysis activity"/>
    <property type="evidence" value="ECO:0007669"/>
    <property type="project" value="InterPro"/>
</dbReference>
<dbReference type="GO" id="GO:0046933">
    <property type="term" value="F:proton-transporting ATP synthase activity, rotational mechanism"/>
    <property type="evidence" value="ECO:0007669"/>
    <property type="project" value="UniProtKB-UniRule"/>
</dbReference>
<dbReference type="CDD" id="cd18110">
    <property type="entry name" value="ATP-synt_F1_beta_C"/>
    <property type="match status" value="1"/>
</dbReference>
<dbReference type="CDD" id="cd18115">
    <property type="entry name" value="ATP-synt_F1_beta_N"/>
    <property type="match status" value="1"/>
</dbReference>
<dbReference type="CDD" id="cd01133">
    <property type="entry name" value="F1-ATPase_beta_CD"/>
    <property type="match status" value="1"/>
</dbReference>
<dbReference type="FunFam" id="1.10.1140.10:FF:000001">
    <property type="entry name" value="ATP synthase subunit beta"/>
    <property type="match status" value="1"/>
</dbReference>
<dbReference type="FunFam" id="2.40.10.170:FF:000005">
    <property type="entry name" value="ATP synthase subunit beta"/>
    <property type="match status" value="1"/>
</dbReference>
<dbReference type="FunFam" id="3.40.50.300:FF:000026">
    <property type="entry name" value="ATP synthase subunit beta"/>
    <property type="match status" value="1"/>
</dbReference>
<dbReference type="Gene3D" id="2.40.10.170">
    <property type="match status" value="1"/>
</dbReference>
<dbReference type="Gene3D" id="1.10.1140.10">
    <property type="entry name" value="Bovine Mitochondrial F1-atpase, Atp Synthase Beta Chain, Chain D, domain 3"/>
    <property type="match status" value="1"/>
</dbReference>
<dbReference type="Gene3D" id="3.40.50.300">
    <property type="entry name" value="P-loop containing nucleotide triphosphate hydrolases"/>
    <property type="match status" value="1"/>
</dbReference>
<dbReference type="HAMAP" id="MF_01347">
    <property type="entry name" value="ATP_synth_beta_bact"/>
    <property type="match status" value="1"/>
</dbReference>
<dbReference type="InterPro" id="IPR003593">
    <property type="entry name" value="AAA+_ATPase"/>
</dbReference>
<dbReference type="InterPro" id="IPR055190">
    <property type="entry name" value="ATP-synt_VA_C"/>
</dbReference>
<dbReference type="InterPro" id="IPR005722">
    <property type="entry name" value="ATP_synth_F1_bsu"/>
</dbReference>
<dbReference type="InterPro" id="IPR020003">
    <property type="entry name" value="ATPase_a/bsu_AS"/>
</dbReference>
<dbReference type="InterPro" id="IPR050053">
    <property type="entry name" value="ATPase_alpha/beta_chains"/>
</dbReference>
<dbReference type="InterPro" id="IPR004100">
    <property type="entry name" value="ATPase_F1/V1/A1_a/bsu_N"/>
</dbReference>
<dbReference type="InterPro" id="IPR036121">
    <property type="entry name" value="ATPase_F1/V1/A1_a/bsu_N_sf"/>
</dbReference>
<dbReference type="InterPro" id="IPR000194">
    <property type="entry name" value="ATPase_F1/V1/A1_a/bsu_nucl-bd"/>
</dbReference>
<dbReference type="InterPro" id="IPR024034">
    <property type="entry name" value="ATPase_F1/V1_b/a_C"/>
</dbReference>
<dbReference type="InterPro" id="IPR027417">
    <property type="entry name" value="P-loop_NTPase"/>
</dbReference>
<dbReference type="NCBIfam" id="TIGR01039">
    <property type="entry name" value="atpD"/>
    <property type="match status" value="1"/>
</dbReference>
<dbReference type="PANTHER" id="PTHR15184">
    <property type="entry name" value="ATP SYNTHASE"/>
    <property type="match status" value="1"/>
</dbReference>
<dbReference type="PANTHER" id="PTHR15184:SF71">
    <property type="entry name" value="ATP SYNTHASE SUBUNIT BETA, MITOCHONDRIAL"/>
    <property type="match status" value="1"/>
</dbReference>
<dbReference type="Pfam" id="PF00006">
    <property type="entry name" value="ATP-synt_ab"/>
    <property type="match status" value="1"/>
</dbReference>
<dbReference type="Pfam" id="PF02874">
    <property type="entry name" value="ATP-synt_ab_N"/>
    <property type="match status" value="1"/>
</dbReference>
<dbReference type="Pfam" id="PF22919">
    <property type="entry name" value="ATP-synt_VA_C"/>
    <property type="match status" value="1"/>
</dbReference>
<dbReference type="SMART" id="SM00382">
    <property type="entry name" value="AAA"/>
    <property type="match status" value="1"/>
</dbReference>
<dbReference type="SUPFAM" id="SSF47917">
    <property type="entry name" value="C-terminal domain of alpha and beta subunits of F1 ATP synthase"/>
    <property type="match status" value="1"/>
</dbReference>
<dbReference type="SUPFAM" id="SSF50615">
    <property type="entry name" value="N-terminal domain of alpha and beta subunits of F1 ATP synthase"/>
    <property type="match status" value="1"/>
</dbReference>
<dbReference type="SUPFAM" id="SSF52540">
    <property type="entry name" value="P-loop containing nucleoside triphosphate hydrolases"/>
    <property type="match status" value="1"/>
</dbReference>
<dbReference type="PROSITE" id="PS00152">
    <property type="entry name" value="ATPASE_ALPHA_BETA"/>
    <property type="match status" value="1"/>
</dbReference>
<name>ATPB_DESAL</name>
<reference key="1">
    <citation type="journal article" date="2012" name="Environ. Microbiol.">
        <title>The genome sequence of Desulfatibacillum alkenivorans AK-01: a blueprint for anaerobic alkane oxidation.</title>
        <authorList>
            <person name="Callaghan A.V."/>
            <person name="Morris B.E."/>
            <person name="Pereira I.A."/>
            <person name="McInerney M.J."/>
            <person name="Austin R.N."/>
            <person name="Groves J.T."/>
            <person name="Kukor J.J."/>
            <person name="Suflita J.M."/>
            <person name="Young L.Y."/>
            <person name="Zylstra G.J."/>
            <person name="Wawrik B."/>
        </authorList>
    </citation>
    <scope>NUCLEOTIDE SEQUENCE [LARGE SCALE GENOMIC DNA]</scope>
    <source>
        <strain>AK-01</strain>
    </source>
</reference>
<organism>
    <name type="scientific">Desulfatibacillum aliphaticivorans</name>
    <dbReference type="NCBI Taxonomy" id="218208"/>
    <lineage>
        <taxon>Bacteria</taxon>
        <taxon>Pseudomonadati</taxon>
        <taxon>Thermodesulfobacteriota</taxon>
        <taxon>Desulfobacteria</taxon>
        <taxon>Desulfobacterales</taxon>
        <taxon>Desulfatibacillaceae</taxon>
        <taxon>Desulfatibacillum</taxon>
    </lineage>
</organism>
<comment type="function">
    <text evidence="1">Produces ATP from ADP in the presence of a proton gradient across the membrane. The catalytic sites are hosted primarily by the beta subunits.</text>
</comment>
<comment type="catalytic activity">
    <reaction evidence="1">
        <text>ATP + H2O + 4 H(+)(in) = ADP + phosphate + 5 H(+)(out)</text>
        <dbReference type="Rhea" id="RHEA:57720"/>
        <dbReference type="ChEBI" id="CHEBI:15377"/>
        <dbReference type="ChEBI" id="CHEBI:15378"/>
        <dbReference type="ChEBI" id="CHEBI:30616"/>
        <dbReference type="ChEBI" id="CHEBI:43474"/>
        <dbReference type="ChEBI" id="CHEBI:456216"/>
        <dbReference type="EC" id="7.1.2.2"/>
    </reaction>
</comment>
<comment type="subunit">
    <text evidence="1">F-type ATPases have 2 components, CF(1) - the catalytic core - and CF(0) - the membrane proton channel. CF(1) has five subunits: alpha(3), beta(3), gamma(1), delta(1), epsilon(1). CF(0) has three main subunits: a(1), b(2) and c(9-12). The alpha and beta chains form an alternating ring which encloses part of the gamma chain. CF(1) is attached to CF(0) by a central stalk formed by the gamma and epsilon chains, while a peripheral stalk is formed by the delta and b chains.</text>
</comment>
<comment type="subcellular location">
    <subcellularLocation>
        <location evidence="1">Cell inner membrane</location>
        <topology evidence="1">Peripheral membrane protein</topology>
    </subcellularLocation>
</comment>
<comment type="similarity">
    <text evidence="1">Belongs to the ATPase alpha/beta chains family.</text>
</comment>
<gene>
    <name evidence="1" type="primary">atpD</name>
    <name type="ordered locus">Dalk_3626</name>
</gene>